<comment type="function">
    <text evidence="1">Nucleotide-binding protein.</text>
</comment>
<comment type="similarity">
    <text evidence="1">Belongs to the YajQ family.</text>
</comment>
<sequence length="160" mass="18260">MPSFDIVSEIDAVELRNAVENSTRELASRFDFRNVDASFELKEETVKLAAEDDFQLGQMMDILRGNLAKRGVDARAMKAKDSVHIGKNWYKEAEFKQGLEALLAKKIVKLIKDAKIKVQASIQGDKVRVTGKKRDDLQEVMAMLREANLEQPLQYNNFRE</sequence>
<dbReference type="EMBL" id="AE003852">
    <property type="protein sequence ID" value="AAF94663.1"/>
    <property type="molecule type" value="Genomic_DNA"/>
</dbReference>
<dbReference type="PIR" id="D82191">
    <property type="entry name" value="D82191"/>
</dbReference>
<dbReference type="RefSeq" id="NP_231149.1">
    <property type="nucleotide sequence ID" value="NC_002505.1"/>
</dbReference>
<dbReference type="RefSeq" id="WP_001138886.1">
    <property type="nucleotide sequence ID" value="NZ_LT906614.1"/>
</dbReference>
<dbReference type="SMR" id="Q9KRX5"/>
<dbReference type="STRING" id="243277.VC_1508"/>
<dbReference type="DNASU" id="2614014"/>
<dbReference type="EnsemblBacteria" id="AAF94663">
    <property type="protein sequence ID" value="AAF94663"/>
    <property type="gene ID" value="VC_1508"/>
</dbReference>
<dbReference type="KEGG" id="vch:VC_1508"/>
<dbReference type="PATRIC" id="fig|243277.26.peg.1435"/>
<dbReference type="eggNOG" id="COG1666">
    <property type="taxonomic scope" value="Bacteria"/>
</dbReference>
<dbReference type="HOGENOM" id="CLU_099839_1_0_6"/>
<dbReference type="Proteomes" id="UP000000584">
    <property type="component" value="Chromosome 1"/>
</dbReference>
<dbReference type="GO" id="GO:0005829">
    <property type="term" value="C:cytosol"/>
    <property type="evidence" value="ECO:0000318"/>
    <property type="project" value="GO_Central"/>
</dbReference>
<dbReference type="GO" id="GO:0000166">
    <property type="term" value="F:nucleotide binding"/>
    <property type="evidence" value="ECO:0000318"/>
    <property type="project" value="GO_Central"/>
</dbReference>
<dbReference type="CDD" id="cd11740">
    <property type="entry name" value="YajQ_like"/>
    <property type="match status" value="1"/>
</dbReference>
<dbReference type="FunFam" id="3.30.70.860:FF:000001">
    <property type="entry name" value="UPF0234 protein YajQ"/>
    <property type="match status" value="1"/>
</dbReference>
<dbReference type="FunFam" id="3.30.70.990:FF:000001">
    <property type="entry name" value="UPF0234 protein YajQ"/>
    <property type="match status" value="1"/>
</dbReference>
<dbReference type="Gene3D" id="3.30.70.860">
    <property type="match status" value="1"/>
</dbReference>
<dbReference type="Gene3D" id="3.30.70.990">
    <property type="entry name" value="YajQ-like, domain 2"/>
    <property type="match status" value="1"/>
</dbReference>
<dbReference type="HAMAP" id="MF_00632">
    <property type="entry name" value="YajQ"/>
    <property type="match status" value="1"/>
</dbReference>
<dbReference type="InterPro" id="IPR007551">
    <property type="entry name" value="DUF520"/>
</dbReference>
<dbReference type="InterPro" id="IPR035571">
    <property type="entry name" value="UPF0234-like_C"/>
</dbReference>
<dbReference type="InterPro" id="IPR035570">
    <property type="entry name" value="UPF0234_N"/>
</dbReference>
<dbReference type="InterPro" id="IPR036183">
    <property type="entry name" value="YajQ-like_sf"/>
</dbReference>
<dbReference type="NCBIfam" id="NF003819">
    <property type="entry name" value="PRK05412.1"/>
    <property type="match status" value="1"/>
</dbReference>
<dbReference type="PANTHER" id="PTHR30476">
    <property type="entry name" value="UPF0234 PROTEIN YAJQ"/>
    <property type="match status" value="1"/>
</dbReference>
<dbReference type="PANTHER" id="PTHR30476:SF0">
    <property type="entry name" value="UPF0234 PROTEIN YAJQ"/>
    <property type="match status" value="1"/>
</dbReference>
<dbReference type="Pfam" id="PF04461">
    <property type="entry name" value="DUF520"/>
    <property type="match status" value="1"/>
</dbReference>
<dbReference type="SUPFAM" id="SSF89963">
    <property type="entry name" value="YajQ-like"/>
    <property type="match status" value="2"/>
</dbReference>
<accession>Q9KRX5</accession>
<gene>
    <name type="ordered locus">VC_1508</name>
</gene>
<protein>
    <recommendedName>
        <fullName evidence="1">Nucleotide-binding protein VC_1508</fullName>
    </recommendedName>
</protein>
<feature type="chain" id="PRO_0000106204" description="Nucleotide-binding protein VC_1508">
    <location>
        <begin position="1"/>
        <end position="160"/>
    </location>
</feature>
<organism>
    <name type="scientific">Vibrio cholerae serotype O1 (strain ATCC 39315 / El Tor Inaba N16961)</name>
    <dbReference type="NCBI Taxonomy" id="243277"/>
    <lineage>
        <taxon>Bacteria</taxon>
        <taxon>Pseudomonadati</taxon>
        <taxon>Pseudomonadota</taxon>
        <taxon>Gammaproteobacteria</taxon>
        <taxon>Vibrionales</taxon>
        <taxon>Vibrionaceae</taxon>
        <taxon>Vibrio</taxon>
    </lineage>
</organism>
<reference key="1">
    <citation type="journal article" date="2000" name="Nature">
        <title>DNA sequence of both chromosomes of the cholera pathogen Vibrio cholerae.</title>
        <authorList>
            <person name="Heidelberg J.F."/>
            <person name="Eisen J.A."/>
            <person name="Nelson W.C."/>
            <person name="Clayton R.A."/>
            <person name="Gwinn M.L."/>
            <person name="Dodson R.J."/>
            <person name="Haft D.H."/>
            <person name="Hickey E.K."/>
            <person name="Peterson J.D."/>
            <person name="Umayam L.A."/>
            <person name="Gill S.R."/>
            <person name="Nelson K.E."/>
            <person name="Read T.D."/>
            <person name="Tettelin H."/>
            <person name="Richardson D.L."/>
            <person name="Ermolaeva M.D."/>
            <person name="Vamathevan J.J."/>
            <person name="Bass S."/>
            <person name="Qin H."/>
            <person name="Dragoi I."/>
            <person name="Sellers P."/>
            <person name="McDonald L.A."/>
            <person name="Utterback T.R."/>
            <person name="Fleischmann R.D."/>
            <person name="Nierman W.C."/>
            <person name="White O."/>
            <person name="Salzberg S.L."/>
            <person name="Smith H.O."/>
            <person name="Colwell R.R."/>
            <person name="Mekalanos J.J."/>
            <person name="Venter J.C."/>
            <person name="Fraser C.M."/>
        </authorList>
    </citation>
    <scope>NUCLEOTIDE SEQUENCE [LARGE SCALE GENOMIC DNA]</scope>
    <source>
        <strain>ATCC 39315 / El Tor Inaba N16961</strain>
    </source>
</reference>
<keyword id="KW-0547">Nucleotide-binding</keyword>
<keyword id="KW-1185">Reference proteome</keyword>
<evidence type="ECO:0000255" key="1">
    <source>
        <dbReference type="HAMAP-Rule" id="MF_00632"/>
    </source>
</evidence>
<proteinExistence type="inferred from homology"/>
<name>Y1508_VIBCH</name>